<evidence type="ECO:0000255" key="1">
    <source>
        <dbReference type="HAMAP-Rule" id="MF_01445"/>
    </source>
</evidence>
<evidence type="ECO:0000256" key="2">
    <source>
        <dbReference type="SAM" id="MobiDB-lite"/>
    </source>
</evidence>
<comment type="function">
    <text evidence="1">Required for the formation of a threonylcarbamoyl group on adenosine at position 37 (t(6)A37) in tRNAs that read codons beginning with adenine. Is involved in the transfer of the threonylcarbamoyl moiety of threonylcarbamoyl-AMP (TC-AMP) to the N6 group of A37, together with TsaE and TsaB. TsaD likely plays a direct catalytic role in this reaction.</text>
</comment>
<comment type="catalytic activity">
    <reaction evidence="1">
        <text>L-threonylcarbamoyladenylate + adenosine(37) in tRNA = N(6)-L-threonylcarbamoyladenosine(37) in tRNA + AMP + H(+)</text>
        <dbReference type="Rhea" id="RHEA:37059"/>
        <dbReference type="Rhea" id="RHEA-COMP:10162"/>
        <dbReference type="Rhea" id="RHEA-COMP:10163"/>
        <dbReference type="ChEBI" id="CHEBI:15378"/>
        <dbReference type="ChEBI" id="CHEBI:73682"/>
        <dbReference type="ChEBI" id="CHEBI:74411"/>
        <dbReference type="ChEBI" id="CHEBI:74418"/>
        <dbReference type="ChEBI" id="CHEBI:456215"/>
        <dbReference type="EC" id="2.3.1.234"/>
    </reaction>
</comment>
<comment type="cofactor">
    <cofactor evidence="1">
        <name>Fe(2+)</name>
        <dbReference type="ChEBI" id="CHEBI:29033"/>
    </cofactor>
    <text evidence="1">Binds 1 Fe(2+) ion per subunit.</text>
</comment>
<comment type="subcellular location">
    <subcellularLocation>
        <location evidence="1">Cytoplasm</location>
    </subcellularLocation>
</comment>
<comment type="similarity">
    <text evidence="1">Belongs to the KAE1 / TsaD family.</text>
</comment>
<sequence>MRVLGIETSCDETAAAIVERDDMGEGRILSNVVLSQIAEHEPYGGVVPEIAARAHVEALDRLVDRALNDAGLKLYEVDAVAATAGPGLIGGLIVGLMTAKALAMAAQKPFYAVNHLEGHALTARLTDGLPFPYLLLLVSGGHTQMVLVRGIGDYERLGTTIDDALGEAFDKTAKLLGLPYPGGPTVERMALQGDQKRFALPRPLKGEARLDFSFSGLKTAVRQTATELVPLTDQDVTDICASFQAAVADTLSDRVGRSLERFKTEFPDCATPSLVVAGGVAANKTLRAALENLCTRHGFAFIAPPLNLCTDNAAMIAWAGAERAATQAPDSLDIAPRSRWPLDEKSAPVFGTGRRGAKA</sequence>
<name>TSAD_BRUA2</name>
<keyword id="KW-0012">Acyltransferase</keyword>
<keyword id="KW-0963">Cytoplasm</keyword>
<keyword id="KW-0408">Iron</keyword>
<keyword id="KW-0479">Metal-binding</keyword>
<keyword id="KW-1185">Reference proteome</keyword>
<keyword id="KW-0808">Transferase</keyword>
<keyword id="KW-0819">tRNA processing</keyword>
<protein>
    <recommendedName>
        <fullName evidence="1">tRNA N6-adenosine threonylcarbamoyltransferase</fullName>
        <ecNumber evidence="1">2.3.1.234</ecNumber>
    </recommendedName>
    <alternativeName>
        <fullName evidence="1">N6-L-threonylcarbamoyladenine synthase</fullName>
        <shortName evidence="1">t(6)A synthase</shortName>
    </alternativeName>
    <alternativeName>
        <fullName evidence="1">t(6)A37 threonylcarbamoyladenosine biosynthesis protein TsaD</fullName>
    </alternativeName>
    <alternativeName>
        <fullName evidence="1">tRNA threonylcarbamoyladenosine biosynthesis protein TsaD</fullName>
    </alternativeName>
</protein>
<reference key="1">
    <citation type="journal article" date="2005" name="Infect. Immun.">
        <title>Whole-genome analyses of speciation events in pathogenic Brucellae.</title>
        <authorList>
            <person name="Chain P.S."/>
            <person name="Comerci D.J."/>
            <person name="Tolmasky M.E."/>
            <person name="Larimer F.W."/>
            <person name="Malfatti S.A."/>
            <person name="Vergez L.M."/>
            <person name="Aguero F."/>
            <person name="Land M.L."/>
            <person name="Ugalde R.A."/>
            <person name="Garcia E."/>
        </authorList>
    </citation>
    <scope>NUCLEOTIDE SEQUENCE [LARGE SCALE GENOMIC DNA]</scope>
    <source>
        <strain>2308</strain>
    </source>
</reference>
<proteinExistence type="inferred from homology"/>
<dbReference type="EC" id="2.3.1.234" evidence="1"/>
<dbReference type="EMBL" id="AM040264">
    <property type="protein sequence ID" value="CAJ11844.1"/>
    <property type="molecule type" value="Genomic_DNA"/>
</dbReference>
<dbReference type="RefSeq" id="WP_002966988.1">
    <property type="nucleotide sequence ID" value="NZ_KN046823.1"/>
</dbReference>
<dbReference type="SMR" id="Q2YLM4"/>
<dbReference type="STRING" id="359391.BAB1_1888"/>
<dbReference type="GeneID" id="93017779"/>
<dbReference type="KEGG" id="bmf:BAB1_1888"/>
<dbReference type="PATRIC" id="fig|359391.11.peg.1127"/>
<dbReference type="HOGENOM" id="CLU_023208_0_2_5"/>
<dbReference type="PhylomeDB" id="Q2YLM4"/>
<dbReference type="Proteomes" id="UP000002719">
    <property type="component" value="Chromosome I"/>
</dbReference>
<dbReference type="GO" id="GO:0005737">
    <property type="term" value="C:cytoplasm"/>
    <property type="evidence" value="ECO:0007669"/>
    <property type="project" value="UniProtKB-SubCell"/>
</dbReference>
<dbReference type="GO" id="GO:0005506">
    <property type="term" value="F:iron ion binding"/>
    <property type="evidence" value="ECO:0007669"/>
    <property type="project" value="UniProtKB-UniRule"/>
</dbReference>
<dbReference type="GO" id="GO:0061711">
    <property type="term" value="F:N(6)-L-threonylcarbamoyladenine synthase activity"/>
    <property type="evidence" value="ECO:0007669"/>
    <property type="project" value="UniProtKB-EC"/>
</dbReference>
<dbReference type="GO" id="GO:0002949">
    <property type="term" value="P:tRNA threonylcarbamoyladenosine modification"/>
    <property type="evidence" value="ECO:0007669"/>
    <property type="project" value="UniProtKB-UniRule"/>
</dbReference>
<dbReference type="CDD" id="cd24133">
    <property type="entry name" value="ASKHA_NBD_TsaD_bac"/>
    <property type="match status" value="1"/>
</dbReference>
<dbReference type="FunFam" id="3.30.420.40:FF:000040">
    <property type="entry name" value="tRNA N6-adenosine threonylcarbamoyltransferase"/>
    <property type="match status" value="1"/>
</dbReference>
<dbReference type="Gene3D" id="3.30.420.40">
    <property type="match status" value="2"/>
</dbReference>
<dbReference type="HAMAP" id="MF_01445">
    <property type="entry name" value="TsaD"/>
    <property type="match status" value="1"/>
</dbReference>
<dbReference type="InterPro" id="IPR043129">
    <property type="entry name" value="ATPase_NBD"/>
</dbReference>
<dbReference type="InterPro" id="IPR000905">
    <property type="entry name" value="Gcp-like_dom"/>
</dbReference>
<dbReference type="InterPro" id="IPR017861">
    <property type="entry name" value="KAE1/TsaD"/>
</dbReference>
<dbReference type="InterPro" id="IPR022450">
    <property type="entry name" value="TsaD"/>
</dbReference>
<dbReference type="NCBIfam" id="TIGR00329">
    <property type="entry name" value="gcp_kae1"/>
    <property type="match status" value="1"/>
</dbReference>
<dbReference type="NCBIfam" id="TIGR03723">
    <property type="entry name" value="T6A_TsaD_YgjD"/>
    <property type="match status" value="1"/>
</dbReference>
<dbReference type="PANTHER" id="PTHR11735">
    <property type="entry name" value="TRNA N6-ADENOSINE THREONYLCARBAMOYLTRANSFERASE"/>
    <property type="match status" value="1"/>
</dbReference>
<dbReference type="PANTHER" id="PTHR11735:SF6">
    <property type="entry name" value="TRNA N6-ADENOSINE THREONYLCARBAMOYLTRANSFERASE, MITOCHONDRIAL"/>
    <property type="match status" value="1"/>
</dbReference>
<dbReference type="Pfam" id="PF00814">
    <property type="entry name" value="TsaD"/>
    <property type="match status" value="1"/>
</dbReference>
<dbReference type="PRINTS" id="PR00789">
    <property type="entry name" value="OSIALOPTASE"/>
</dbReference>
<dbReference type="SUPFAM" id="SSF53067">
    <property type="entry name" value="Actin-like ATPase domain"/>
    <property type="match status" value="2"/>
</dbReference>
<gene>
    <name evidence="1" type="primary">tsaD</name>
    <name type="synonym">gcp</name>
    <name type="ordered locus">BAB1_1888</name>
</gene>
<feature type="chain" id="PRO_0000303294" description="tRNA N6-adenosine threonylcarbamoyltransferase">
    <location>
        <begin position="1"/>
        <end position="359"/>
    </location>
</feature>
<feature type="region of interest" description="Disordered" evidence="2">
    <location>
        <begin position="328"/>
        <end position="359"/>
    </location>
</feature>
<feature type="binding site" evidence="1">
    <location>
        <position position="115"/>
    </location>
    <ligand>
        <name>Fe cation</name>
        <dbReference type="ChEBI" id="CHEBI:24875"/>
    </ligand>
</feature>
<feature type="binding site" evidence="1">
    <location>
        <position position="119"/>
    </location>
    <ligand>
        <name>Fe cation</name>
        <dbReference type="ChEBI" id="CHEBI:24875"/>
    </ligand>
</feature>
<feature type="binding site" evidence="1">
    <location>
        <begin position="137"/>
        <end position="141"/>
    </location>
    <ligand>
        <name>substrate</name>
    </ligand>
</feature>
<feature type="binding site" evidence="1">
    <location>
        <position position="170"/>
    </location>
    <ligand>
        <name>substrate</name>
    </ligand>
</feature>
<feature type="binding site" evidence="1">
    <location>
        <position position="183"/>
    </location>
    <ligand>
        <name>substrate</name>
    </ligand>
</feature>
<feature type="binding site" evidence="1">
    <location>
        <position position="283"/>
    </location>
    <ligand>
        <name>substrate</name>
    </ligand>
</feature>
<feature type="binding site" evidence="1">
    <location>
        <position position="311"/>
    </location>
    <ligand>
        <name>Fe cation</name>
        <dbReference type="ChEBI" id="CHEBI:24875"/>
    </ligand>
</feature>
<organism>
    <name type="scientific">Brucella abortus (strain 2308)</name>
    <dbReference type="NCBI Taxonomy" id="359391"/>
    <lineage>
        <taxon>Bacteria</taxon>
        <taxon>Pseudomonadati</taxon>
        <taxon>Pseudomonadota</taxon>
        <taxon>Alphaproteobacteria</taxon>
        <taxon>Hyphomicrobiales</taxon>
        <taxon>Brucellaceae</taxon>
        <taxon>Brucella/Ochrobactrum group</taxon>
        <taxon>Brucella</taxon>
    </lineage>
</organism>
<accession>Q2YLM4</accession>